<keyword id="KW-0046">Antibiotic resistance</keyword>
<keyword id="KW-0997">Cell inner membrane</keyword>
<keyword id="KW-1003">Cell membrane</keyword>
<keyword id="KW-0133">Cell shape</keyword>
<keyword id="KW-0961">Cell wall biogenesis/degradation</keyword>
<keyword id="KW-0378">Hydrolase</keyword>
<keyword id="KW-0472">Membrane</keyword>
<keyword id="KW-0573">Peptidoglycan synthesis</keyword>
<keyword id="KW-0812">Transmembrane</keyword>
<keyword id="KW-1133">Transmembrane helix</keyword>
<dbReference type="EC" id="3.6.1.27" evidence="1"/>
<dbReference type="EMBL" id="CU928160">
    <property type="protein sequence ID" value="CAR00019.1"/>
    <property type="molecule type" value="Genomic_DNA"/>
</dbReference>
<dbReference type="SMR" id="B7LZK7"/>
<dbReference type="KEGG" id="ecr:ECIAI1_3205"/>
<dbReference type="HOGENOM" id="CLU_060296_2_0_6"/>
<dbReference type="GO" id="GO:0005886">
    <property type="term" value="C:plasma membrane"/>
    <property type="evidence" value="ECO:0007669"/>
    <property type="project" value="UniProtKB-SubCell"/>
</dbReference>
<dbReference type="GO" id="GO:0050380">
    <property type="term" value="F:undecaprenyl-diphosphatase activity"/>
    <property type="evidence" value="ECO:0007669"/>
    <property type="project" value="UniProtKB-UniRule"/>
</dbReference>
<dbReference type="GO" id="GO:0071555">
    <property type="term" value="P:cell wall organization"/>
    <property type="evidence" value="ECO:0007669"/>
    <property type="project" value="UniProtKB-KW"/>
</dbReference>
<dbReference type="GO" id="GO:0009252">
    <property type="term" value="P:peptidoglycan biosynthetic process"/>
    <property type="evidence" value="ECO:0007669"/>
    <property type="project" value="UniProtKB-KW"/>
</dbReference>
<dbReference type="GO" id="GO:0008360">
    <property type="term" value="P:regulation of cell shape"/>
    <property type="evidence" value="ECO:0007669"/>
    <property type="project" value="UniProtKB-KW"/>
</dbReference>
<dbReference type="GO" id="GO:0046677">
    <property type="term" value="P:response to antibiotic"/>
    <property type="evidence" value="ECO:0007669"/>
    <property type="project" value="UniProtKB-UniRule"/>
</dbReference>
<dbReference type="HAMAP" id="MF_01006">
    <property type="entry name" value="Undec_diphosphatase"/>
    <property type="match status" value="1"/>
</dbReference>
<dbReference type="InterPro" id="IPR003824">
    <property type="entry name" value="UppP"/>
</dbReference>
<dbReference type="NCBIfam" id="NF001388">
    <property type="entry name" value="PRK00281.1-1"/>
    <property type="match status" value="1"/>
</dbReference>
<dbReference type="NCBIfam" id="NF001389">
    <property type="entry name" value="PRK00281.1-2"/>
    <property type="match status" value="1"/>
</dbReference>
<dbReference type="NCBIfam" id="NF001390">
    <property type="entry name" value="PRK00281.1-4"/>
    <property type="match status" value="1"/>
</dbReference>
<dbReference type="NCBIfam" id="TIGR00753">
    <property type="entry name" value="undec_PP_bacA"/>
    <property type="match status" value="1"/>
</dbReference>
<dbReference type="PANTHER" id="PTHR30622">
    <property type="entry name" value="UNDECAPRENYL-DIPHOSPHATASE"/>
    <property type="match status" value="1"/>
</dbReference>
<dbReference type="PANTHER" id="PTHR30622:SF3">
    <property type="entry name" value="UNDECAPRENYL-DIPHOSPHATASE"/>
    <property type="match status" value="1"/>
</dbReference>
<dbReference type="Pfam" id="PF02673">
    <property type="entry name" value="BacA"/>
    <property type="match status" value="1"/>
</dbReference>
<comment type="function">
    <text evidence="1">Catalyzes the dephosphorylation of undecaprenyl diphosphate (UPP). Confers resistance to bacitracin.</text>
</comment>
<comment type="catalytic activity">
    <reaction evidence="1">
        <text>di-trans,octa-cis-undecaprenyl diphosphate + H2O = di-trans,octa-cis-undecaprenyl phosphate + phosphate + H(+)</text>
        <dbReference type="Rhea" id="RHEA:28094"/>
        <dbReference type="ChEBI" id="CHEBI:15377"/>
        <dbReference type="ChEBI" id="CHEBI:15378"/>
        <dbReference type="ChEBI" id="CHEBI:43474"/>
        <dbReference type="ChEBI" id="CHEBI:58405"/>
        <dbReference type="ChEBI" id="CHEBI:60392"/>
        <dbReference type="EC" id="3.6.1.27"/>
    </reaction>
</comment>
<comment type="subcellular location">
    <subcellularLocation>
        <location evidence="1">Cell inner membrane</location>
        <topology evidence="1">Multi-pass membrane protein</topology>
    </subcellularLocation>
</comment>
<comment type="miscellaneous">
    <text>Bacitracin is thought to be involved in the inhibition of peptidoglycan synthesis by sequestering undecaprenyl diphosphate, thereby reducing the pool of lipid carrier available.</text>
</comment>
<comment type="similarity">
    <text evidence="1">Belongs to the UppP family.</text>
</comment>
<organism>
    <name type="scientific">Escherichia coli O8 (strain IAI1)</name>
    <dbReference type="NCBI Taxonomy" id="585034"/>
    <lineage>
        <taxon>Bacteria</taxon>
        <taxon>Pseudomonadati</taxon>
        <taxon>Pseudomonadota</taxon>
        <taxon>Gammaproteobacteria</taxon>
        <taxon>Enterobacterales</taxon>
        <taxon>Enterobacteriaceae</taxon>
        <taxon>Escherichia</taxon>
    </lineage>
</organism>
<evidence type="ECO:0000255" key="1">
    <source>
        <dbReference type="HAMAP-Rule" id="MF_01006"/>
    </source>
</evidence>
<gene>
    <name evidence="1" type="primary">uppP</name>
    <name type="ordered locus">ECIAI1_3205</name>
</gene>
<reference key="1">
    <citation type="journal article" date="2009" name="PLoS Genet.">
        <title>Organised genome dynamics in the Escherichia coli species results in highly diverse adaptive paths.</title>
        <authorList>
            <person name="Touchon M."/>
            <person name="Hoede C."/>
            <person name="Tenaillon O."/>
            <person name="Barbe V."/>
            <person name="Baeriswyl S."/>
            <person name="Bidet P."/>
            <person name="Bingen E."/>
            <person name="Bonacorsi S."/>
            <person name="Bouchier C."/>
            <person name="Bouvet O."/>
            <person name="Calteau A."/>
            <person name="Chiapello H."/>
            <person name="Clermont O."/>
            <person name="Cruveiller S."/>
            <person name="Danchin A."/>
            <person name="Diard M."/>
            <person name="Dossat C."/>
            <person name="Karoui M.E."/>
            <person name="Frapy E."/>
            <person name="Garry L."/>
            <person name="Ghigo J.M."/>
            <person name="Gilles A.M."/>
            <person name="Johnson J."/>
            <person name="Le Bouguenec C."/>
            <person name="Lescat M."/>
            <person name="Mangenot S."/>
            <person name="Martinez-Jehanne V."/>
            <person name="Matic I."/>
            <person name="Nassif X."/>
            <person name="Oztas S."/>
            <person name="Petit M.A."/>
            <person name="Pichon C."/>
            <person name="Rouy Z."/>
            <person name="Ruf C.S."/>
            <person name="Schneider D."/>
            <person name="Tourret J."/>
            <person name="Vacherie B."/>
            <person name="Vallenet D."/>
            <person name="Medigue C."/>
            <person name="Rocha E.P.C."/>
            <person name="Denamur E."/>
        </authorList>
    </citation>
    <scope>NUCLEOTIDE SEQUENCE [LARGE SCALE GENOMIC DNA]</scope>
    <source>
        <strain>IAI1</strain>
    </source>
</reference>
<name>UPPP_ECO8A</name>
<accession>B7LZK7</accession>
<feature type="chain" id="PRO_1000197371" description="Undecaprenyl-diphosphatase">
    <location>
        <begin position="1"/>
        <end position="273"/>
    </location>
</feature>
<feature type="transmembrane region" description="Helical" evidence="1">
    <location>
        <begin position="6"/>
        <end position="26"/>
    </location>
</feature>
<feature type="transmembrane region" description="Helical" evidence="1">
    <location>
        <begin position="45"/>
        <end position="65"/>
    </location>
</feature>
<feature type="transmembrane region" description="Helical" evidence="1">
    <location>
        <begin position="90"/>
        <end position="110"/>
    </location>
</feature>
<feature type="transmembrane region" description="Helical" evidence="1">
    <location>
        <begin position="116"/>
        <end position="136"/>
    </location>
</feature>
<feature type="transmembrane region" description="Helical" evidence="1">
    <location>
        <begin position="190"/>
        <end position="210"/>
    </location>
</feature>
<feature type="transmembrane region" description="Helical" evidence="1">
    <location>
        <begin position="222"/>
        <end position="242"/>
    </location>
</feature>
<feature type="transmembrane region" description="Helical" evidence="1">
    <location>
        <begin position="252"/>
        <end position="272"/>
    </location>
</feature>
<proteinExistence type="inferred from homology"/>
<protein>
    <recommendedName>
        <fullName evidence="1">Undecaprenyl-diphosphatase</fullName>
        <ecNumber evidence="1">3.6.1.27</ecNumber>
    </recommendedName>
    <alternativeName>
        <fullName evidence="1">Bacitracin resistance protein</fullName>
    </alternativeName>
    <alternativeName>
        <fullName evidence="1">Undecaprenyl pyrophosphate phosphatase</fullName>
    </alternativeName>
</protein>
<sequence>MSDMHSLLIAAILGVVEGLTEFLPVSSTGHMIIVGHLLGFEGDTAKTFEVVIQLGSILAVVVMFWRRLFGLIGIHFGRPLQHEGESKGRLTLIHILLGMIPAVVLGLLFHDTIKSLFNPINVMYALVVGGLLLIAAECLKPKEPRAPGLDDMTYRQAFMIGCFQCLALWPGFSRSGATISGGMLMGVSRYAASEFSFLLAVPMMMGATALDLYKSWGFLTTGDIPMFAVGFITAFVVALIAIKTFLQLIKRISFIPFAIYRFIVAAAVYVVFF</sequence>